<accession>Q3K8U4</accession>
<protein>
    <recommendedName>
        <fullName evidence="1">Cytidylate kinase</fullName>
        <shortName evidence="1">CK</shortName>
        <ecNumber evidence="1">2.7.4.25</ecNumber>
    </recommendedName>
    <alternativeName>
        <fullName evidence="1">Cytidine monophosphate kinase</fullName>
        <shortName evidence="1">CMP kinase</shortName>
    </alternativeName>
</protein>
<organism>
    <name type="scientific">Pseudomonas fluorescens (strain Pf0-1)</name>
    <dbReference type="NCBI Taxonomy" id="205922"/>
    <lineage>
        <taxon>Bacteria</taxon>
        <taxon>Pseudomonadati</taxon>
        <taxon>Pseudomonadota</taxon>
        <taxon>Gammaproteobacteria</taxon>
        <taxon>Pseudomonadales</taxon>
        <taxon>Pseudomonadaceae</taxon>
        <taxon>Pseudomonas</taxon>
    </lineage>
</organism>
<evidence type="ECO:0000255" key="1">
    <source>
        <dbReference type="HAMAP-Rule" id="MF_00238"/>
    </source>
</evidence>
<comment type="catalytic activity">
    <reaction evidence="1">
        <text>CMP + ATP = CDP + ADP</text>
        <dbReference type="Rhea" id="RHEA:11600"/>
        <dbReference type="ChEBI" id="CHEBI:30616"/>
        <dbReference type="ChEBI" id="CHEBI:58069"/>
        <dbReference type="ChEBI" id="CHEBI:60377"/>
        <dbReference type="ChEBI" id="CHEBI:456216"/>
        <dbReference type="EC" id="2.7.4.25"/>
    </reaction>
</comment>
<comment type="catalytic activity">
    <reaction evidence="1">
        <text>dCMP + ATP = dCDP + ADP</text>
        <dbReference type="Rhea" id="RHEA:25094"/>
        <dbReference type="ChEBI" id="CHEBI:30616"/>
        <dbReference type="ChEBI" id="CHEBI:57566"/>
        <dbReference type="ChEBI" id="CHEBI:58593"/>
        <dbReference type="ChEBI" id="CHEBI:456216"/>
        <dbReference type="EC" id="2.7.4.25"/>
    </reaction>
</comment>
<comment type="subcellular location">
    <subcellularLocation>
        <location evidence="1">Cytoplasm</location>
    </subcellularLocation>
</comment>
<comment type="similarity">
    <text evidence="1">Belongs to the cytidylate kinase family. Type 1 subfamily.</text>
</comment>
<proteinExistence type="inferred from homology"/>
<keyword id="KW-0067">ATP-binding</keyword>
<keyword id="KW-0963">Cytoplasm</keyword>
<keyword id="KW-0418">Kinase</keyword>
<keyword id="KW-0547">Nucleotide-binding</keyword>
<keyword id="KW-0808">Transferase</keyword>
<reference key="1">
    <citation type="journal article" date="2009" name="Genome Biol.">
        <title>Genomic and genetic analyses of diversity and plant interactions of Pseudomonas fluorescens.</title>
        <authorList>
            <person name="Silby M.W."/>
            <person name="Cerdeno-Tarraga A.M."/>
            <person name="Vernikos G.S."/>
            <person name="Giddens S.R."/>
            <person name="Jackson R.W."/>
            <person name="Preston G.M."/>
            <person name="Zhang X.-X."/>
            <person name="Moon C.D."/>
            <person name="Gehrig S.M."/>
            <person name="Godfrey S.A.C."/>
            <person name="Knight C.G."/>
            <person name="Malone J.G."/>
            <person name="Robinson Z."/>
            <person name="Spiers A.J."/>
            <person name="Harris S."/>
            <person name="Challis G.L."/>
            <person name="Yaxley A.M."/>
            <person name="Harris D."/>
            <person name="Seeger K."/>
            <person name="Murphy L."/>
            <person name="Rutter S."/>
            <person name="Squares R."/>
            <person name="Quail M.A."/>
            <person name="Saunders E."/>
            <person name="Mavromatis K."/>
            <person name="Brettin T.S."/>
            <person name="Bentley S.D."/>
            <person name="Hothersall J."/>
            <person name="Stephens E."/>
            <person name="Thomas C.M."/>
            <person name="Parkhill J."/>
            <person name="Levy S.B."/>
            <person name="Rainey P.B."/>
            <person name="Thomson N.R."/>
        </authorList>
    </citation>
    <scope>NUCLEOTIDE SEQUENCE [LARGE SCALE GENOMIC DNA]</scope>
    <source>
        <strain>Pf0-1</strain>
    </source>
</reference>
<sequence length="229" mass="24595">MNNIAPVITIDGPSGSGKGTVAGILAKRLGWNLLDSGALYRLLAFAAHNHGVDLTNEELLKKLAAHLDVQFIAATDGQLQRIILEGDEVSDVIRTESVGSGASQVAALPAVREALLQRQRAFQEAPGLVADGRDMGTVVFPNAPLKIFLTASAEERARRRYLQLKGKVEGVSLSSLLDEIRARDERDTQRAVAPLKPAADAIQLDSTELSIDQVLERIMSEIAIRDIAG</sequence>
<feature type="chain" id="PRO_1000048253" description="Cytidylate kinase">
    <location>
        <begin position="1"/>
        <end position="229"/>
    </location>
</feature>
<feature type="binding site" evidence="1">
    <location>
        <begin position="12"/>
        <end position="20"/>
    </location>
    <ligand>
        <name>ATP</name>
        <dbReference type="ChEBI" id="CHEBI:30616"/>
    </ligand>
</feature>
<dbReference type="EC" id="2.7.4.25" evidence="1"/>
<dbReference type="EMBL" id="CP000094">
    <property type="protein sequence ID" value="ABA75810.1"/>
    <property type="molecule type" value="Genomic_DNA"/>
</dbReference>
<dbReference type="RefSeq" id="WP_011335369.1">
    <property type="nucleotide sequence ID" value="NC_007492.2"/>
</dbReference>
<dbReference type="SMR" id="Q3K8U4"/>
<dbReference type="KEGG" id="pfo:Pfl01_4073"/>
<dbReference type="eggNOG" id="COG0283">
    <property type="taxonomic scope" value="Bacteria"/>
</dbReference>
<dbReference type="HOGENOM" id="CLU_079959_0_2_6"/>
<dbReference type="Proteomes" id="UP000002704">
    <property type="component" value="Chromosome"/>
</dbReference>
<dbReference type="GO" id="GO:0005829">
    <property type="term" value="C:cytosol"/>
    <property type="evidence" value="ECO:0007669"/>
    <property type="project" value="TreeGrafter"/>
</dbReference>
<dbReference type="GO" id="GO:0005524">
    <property type="term" value="F:ATP binding"/>
    <property type="evidence" value="ECO:0007669"/>
    <property type="project" value="UniProtKB-UniRule"/>
</dbReference>
<dbReference type="GO" id="GO:0036430">
    <property type="term" value="F:CMP kinase activity"/>
    <property type="evidence" value="ECO:0007669"/>
    <property type="project" value="RHEA"/>
</dbReference>
<dbReference type="GO" id="GO:0036431">
    <property type="term" value="F:dCMP kinase activity"/>
    <property type="evidence" value="ECO:0007669"/>
    <property type="project" value="RHEA"/>
</dbReference>
<dbReference type="GO" id="GO:0015949">
    <property type="term" value="P:nucleobase-containing small molecule interconversion"/>
    <property type="evidence" value="ECO:0007669"/>
    <property type="project" value="TreeGrafter"/>
</dbReference>
<dbReference type="GO" id="GO:0006220">
    <property type="term" value="P:pyrimidine nucleotide metabolic process"/>
    <property type="evidence" value="ECO:0007669"/>
    <property type="project" value="UniProtKB-UniRule"/>
</dbReference>
<dbReference type="CDD" id="cd02020">
    <property type="entry name" value="CMPK"/>
    <property type="match status" value="1"/>
</dbReference>
<dbReference type="FunFam" id="3.40.50.300:FF:000262">
    <property type="entry name" value="Cytidylate kinase"/>
    <property type="match status" value="1"/>
</dbReference>
<dbReference type="Gene3D" id="3.40.50.300">
    <property type="entry name" value="P-loop containing nucleotide triphosphate hydrolases"/>
    <property type="match status" value="1"/>
</dbReference>
<dbReference type="HAMAP" id="MF_00238">
    <property type="entry name" value="Cytidyl_kinase_type1"/>
    <property type="match status" value="1"/>
</dbReference>
<dbReference type="InterPro" id="IPR003136">
    <property type="entry name" value="Cytidylate_kin"/>
</dbReference>
<dbReference type="InterPro" id="IPR011994">
    <property type="entry name" value="Cytidylate_kinase_dom"/>
</dbReference>
<dbReference type="InterPro" id="IPR027417">
    <property type="entry name" value="P-loop_NTPase"/>
</dbReference>
<dbReference type="NCBIfam" id="TIGR00017">
    <property type="entry name" value="cmk"/>
    <property type="match status" value="1"/>
</dbReference>
<dbReference type="PANTHER" id="PTHR21299:SF2">
    <property type="entry name" value="CYTIDYLATE KINASE"/>
    <property type="match status" value="1"/>
</dbReference>
<dbReference type="PANTHER" id="PTHR21299">
    <property type="entry name" value="CYTIDYLATE KINASE/PANTOATE-BETA-ALANINE LIGASE"/>
    <property type="match status" value="1"/>
</dbReference>
<dbReference type="Pfam" id="PF02224">
    <property type="entry name" value="Cytidylate_kin"/>
    <property type="match status" value="1"/>
</dbReference>
<dbReference type="SUPFAM" id="SSF52540">
    <property type="entry name" value="P-loop containing nucleoside triphosphate hydrolases"/>
    <property type="match status" value="1"/>
</dbReference>
<name>KCY_PSEPF</name>
<gene>
    <name evidence="1" type="primary">cmk</name>
    <name type="ordered locus">Pfl01_4073</name>
</gene>